<reference key="1">
    <citation type="journal article" date="2002" name="Nucleic Acids Res.">
        <title>Genome sequence of Oceanobacillus iheyensis isolated from the Iheya Ridge and its unexpected adaptive capabilities to extreme environments.</title>
        <authorList>
            <person name="Takami H."/>
            <person name="Takaki Y."/>
            <person name="Uchiyama I."/>
        </authorList>
    </citation>
    <scope>NUCLEOTIDE SEQUENCE [LARGE SCALE GENOMIC DNA]</scope>
    <source>
        <strain>DSM 14371 / CIP 107618 / JCM 11309 / KCTC 3954 / HTE831</strain>
    </source>
</reference>
<dbReference type="EMBL" id="BA000028">
    <property type="protein sequence ID" value="BAC14031.1"/>
    <property type="molecule type" value="Genomic_DNA"/>
</dbReference>
<dbReference type="RefSeq" id="WP_011066470.1">
    <property type="nucleotide sequence ID" value="NC_004193.1"/>
</dbReference>
<dbReference type="SMR" id="Q8EPM2"/>
<dbReference type="STRING" id="221109.gene:10734321"/>
<dbReference type="KEGG" id="oih:OB2075"/>
<dbReference type="eggNOG" id="COG0218">
    <property type="taxonomic scope" value="Bacteria"/>
</dbReference>
<dbReference type="HOGENOM" id="CLU_033732_3_0_9"/>
<dbReference type="OrthoDB" id="9804921at2"/>
<dbReference type="PhylomeDB" id="Q8EPM2"/>
<dbReference type="Proteomes" id="UP000000822">
    <property type="component" value="Chromosome"/>
</dbReference>
<dbReference type="GO" id="GO:0005829">
    <property type="term" value="C:cytosol"/>
    <property type="evidence" value="ECO:0007669"/>
    <property type="project" value="TreeGrafter"/>
</dbReference>
<dbReference type="GO" id="GO:0005525">
    <property type="term" value="F:GTP binding"/>
    <property type="evidence" value="ECO:0007669"/>
    <property type="project" value="UniProtKB-UniRule"/>
</dbReference>
<dbReference type="GO" id="GO:0046872">
    <property type="term" value="F:metal ion binding"/>
    <property type="evidence" value="ECO:0007669"/>
    <property type="project" value="UniProtKB-KW"/>
</dbReference>
<dbReference type="GO" id="GO:0000917">
    <property type="term" value="P:division septum assembly"/>
    <property type="evidence" value="ECO:0007669"/>
    <property type="project" value="UniProtKB-KW"/>
</dbReference>
<dbReference type="CDD" id="cd01876">
    <property type="entry name" value="YihA_EngB"/>
    <property type="match status" value="1"/>
</dbReference>
<dbReference type="FunFam" id="3.40.50.300:FF:000098">
    <property type="entry name" value="Probable GTP-binding protein EngB"/>
    <property type="match status" value="1"/>
</dbReference>
<dbReference type="Gene3D" id="3.40.50.300">
    <property type="entry name" value="P-loop containing nucleotide triphosphate hydrolases"/>
    <property type="match status" value="1"/>
</dbReference>
<dbReference type="HAMAP" id="MF_00321">
    <property type="entry name" value="GTPase_EngB"/>
    <property type="match status" value="1"/>
</dbReference>
<dbReference type="InterPro" id="IPR030393">
    <property type="entry name" value="G_ENGB_dom"/>
</dbReference>
<dbReference type="InterPro" id="IPR006073">
    <property type="entry name" value="GTP-bd"/>
</dbReference>
<dbReference type="InterPro" id="IPR019987">
    <property type="entry name" value="GTP-bd_ribosome_bio_YsxC"/>
</dbReference>
<dbReference type="InterPro" id="IPR027417">
    <property type="entry name" value="P-loop_NTPase"/>
</dbReference>
<dbReference type="InterPro" id="IPR005225">
    <property type="entry name" value="Small_GTP-bd"/>
</dbReference>
<dbReference type="NCBIfam" id="TIGR03598">
    <property type="entry name" value="GTPase_YsxC"/>
    <property type="match status" value="1"/>
</dbReference>
<dbReference type="NCBIfam" id="TIGR00231">
    <property type="entry name" value="small_GTP"/>
    <property type="match status" value="1"/>
</dbReference>
<dbReference type="PANTHER" id="PTHR11649:SF13">
    <property type="entry name" value="ENGB-TYPE G DOMAIN-CONTAINING PROTEIN"/>
    <property type="match status" value="1"/>
</dbReference>
<dbReference type="PANTHER" id="PTHR11649">
    <property type="entry name" value="MSS1/TRME-RELATED GTP-BINDING PROTEIN"/>
    <property type="match status" value="1"/>
</dbReference>
<dbReference type="Pfam" id="PF01926">
    <property type="entry name" value="MMR_HSR1"/>
    <property type="match status" value="1"/>
</dbReference>
<dbReference type="PRINTS" id="PR00449">
    <property type="entry name" value="RASTRNSFRMNG"/>
</dbReference>
<dbReference type="SUPFAM" id="SSF52540">
    <property type="entry name" value="P-loop containing nucleoside triphosphate hydrolases"/>
    <property type="match status" value="1"/>
</dbReference>
<dbReference type="PROSITE" id="PS51706">
    <property type="entry name" value="G_ENGB"/>
    <property type="match status" value="1"/>
</dbReference>
<keyword id="KW-0131">Cell cycle</keyword>
<keyword id="KW-0132">Cell division</keyword>
<keyword id="KW-0342">GTP-binding</keyword>
<keyword id="KW-0460">Magnesium</keyword>
<keyword id="KW-0479">Metal-binding</keyword>
<keyword id="KW-0547">Nucleotide-binding</keyword>
<keyword id="KW-1185">Reference proteome</keyword>
<keyword id="KW-0717">Septation</keyword>
<sequence length="195" mass="22730">MKVNHAEIVISAVSKKQYPEDQLPEIALAGRSNVGKSSFINRLINRKNLARTSSKPGKTQTLNFYRINESFYFVDVPGYGYAKVSKKEREKWGRMMEEYFQTRDTLRAVVLVTDLRHDPTQDDIQMYDFIKYFDLPVIIIGTKLDKITKNKRQKHINRAKQVLEMDETDLFIPFSAEIGEGKDEAWSALSRYIKR</sequence>
<proteinExistence type="inferred from homology"/>
<organism>
    <name type="scientific">Oceanobacillus iheyensis (strain DSM 14371 / CIP 107618 / JCM 11309 / KCTC 3954 / HTE831)</name>
    <dbReference type="NCBI Taxonomy" id="221109"/>
    <lineage>
        <taxon>Bacteria</taxon>
        <taxon>Bacillati</taxon>
        <taxon>Bacillota</taxon>
        <taxon>Bacilli</taxon>
        <taxon>Bacillales</taxon>
        <taxon>Bacillaceae</taxon>
        <taxon>Oceanobacillus</taxon>
    </lineage>
</organism>
<name>ENGB_OCEIH</name>
<accession>Q8EPM2</accession>
<protein>
    <recommendedName>
        <fullName evidence="1">Probable GTP-binding protein EngB</fullName>
    </recommendedName>
</protein>
<evidence type="ECO:0000255" key="1">
    <source>
        <dbReference type="HAMAP-Rule" id="MF_00321"/>
    </source>
</evidence>
<comment type="function">
    <text evidence="1">Necessary for normal cell division and for the maintenance of normal septation.</text>
</comment>
<comment type="cofactor">
    <cofactor evidence="1">
        <name>Mg(2+)</name>
        <dbReference type="ChEBI" id="CHEBI:18420"/>
    </cofactor>
</comment>
<comment type="similarity">
    <text evidence="1">Belongs to the TRAFAC class TrmE-Era-EngA-EngB-Septin-like GTPase superfamily. EngB GTPase family.</text>
</comment>
<feature type="chain" id="PRO_0000266910" description="Probable GTP-binding protein EngB">
    <location>
        <begin position="1"/>
        <end position="195"/>
    </location>
</feature>
<feature type="domain" description="EngB-type G" evidence="1">
    <location>
        <begin position="22"/>
        <end position="195"/>
    </location>
</feature>
<feature type="binding site" evidence="1">
    <location>
        <begin position="30"/>
        <end position="37"/>
    </location>
    <ligand>
        <name>GTP</name>
        <dbReference type="ChEBI" id="CHEBI:37565"/>
    </ligand>
</feature>
<feature type="binding site" evidence="1">
    <location>
        <position position="37"/>
    </location>
    <ligand>
        <name>Mg(2+)</name>
        <dbReference type="ChEBI" id="CHEBI:18420"/>
    </ligand>
</feature>
<feature type="binding site" evidence="1">
    <location>
        <begin position="57"/>
        <end position="61"/>
    </location>
    <ligand>
        <name>GTP</name>
        <dbReference type="ChEBI" id="CHEBI:37565"/>
    </ligand>
</feature>
<feature type="binding site" evidence="1">
    <location>
        <position position="59"/>
    </location>
    <ligand>
        <name>Mg(2+)</name>
        <dbReference type="ChEBI" id="CHEBI:18420"/>
    </ligand>
</feature>
<feature type="binding site" evidence="1">
    <location>
        <begin position="75"/>
        <end position="78"/>
    </location>
    <ligand>
        <name>GTP</name>
        <dbReference type="ChEBI" id="CHEBI:37565"/>
    </ligand>
</feature>
<feature type="binding site" evidence="1">
    <location>
        <begin position="142"/>
        <end position="145"/>
    </location>
    <ligand>
        <name>GTP</name>
        <dbReference type="ChEBI" id="CHEBI:37565"/>
    </ligand>
</feature>
<feature type="binding site" evidence="1">
    <location>
        <begin position="174"/>
        <end position="176"/>
    </location>
    <ligand>
        <name>GTP</name>
        <dbReference type="ChEBI" id="CHEBI:37565"/>
    </ligand>
</feature>
<gene>
    <name evidence="1" type="primary">engB</name>
    <name type="ordered locus">OB2075</name>
</gene>